<feature type="chain" id="PRO_0000423392" description="Pregnancy-associated glycoprotein 39C" evidence="3">
    <location>
        <begin position="1"/>
        <end position="10" status="greater than"/>
    </location>
</feature>
<feature type="non-terminal residue" evidence="4">
    <location>
        <position position="10"/>
    </location>
</feature>
<reference evidence="5" key="1">
    <citation type="journal article" date="2014" name="Acta Vet. Scand.">
        <title>Identification of pregnancy-associated glycoproteins and alpha-fetoprotein in fallow deer (Dama dama) placenta.</title>
        <authorList>
            <person name="Beriot M."/>
            <person name="Tchimbou A.F."/>
            <person name="Barbato O."/>
            <person name="Beckers J.F."/>
            <person name="de Sousa N.M."/>
        </authorList>
    </citation>
    <scope>PROTEIN SEQUENCE</scope>
    <scope>TISSUE SPECIFICITY</scope>
    <source>
        <tissue evidence="4">Fetal cotyledon</tissue>
    </source>
</reference>
<accession>C0HJC9</accession>
<dbReference type="GO" id="GO:0005576">
    <property type="term" value="C:extracellular region"/>
    <property type="evidence" value="ECO:0007669"/>
    <property type="project" value="UniProtKB-SubCell"/>
</dbReference>
<dbReference type="GO" id="GO:0004190">
    <property type="term" value="F:aspartic-type endopeptidase activity"/>
    <property type="evidence" value="ECO:0007669"/>
    <property type="project" value="UniProtKB-KW"/>
</dbReference>
<dbReference type="GO" id="GO:0006508">
    <property type="term" value="P:proteolysis"/>
    <property type="evidence" value="ECO:0007669"/>
    <property type="project" value="UniProtKB-KW"/>
</dbReference>
<organism>
    <name type="scientific">Dama dama</name>
    <name type="common">Fallow deer</name>
    <name type="synonym">Cervus dama</name>
    <dbReference type="NCBI Taxonomy" id="30532"/>
    <lineage>
        <taxon>Eukaryota</taxon>
        <taxon>Metazoa</taxon>
        <taxon>Chordata</taxon>
        <taxon>Craniata</taxon>
        <taxon>Vertebrata</taxon>
        <taxon>Euteleostomi</taxon>
        <taxon>Mammalia</taxon>
        <taxon>Eutheria</taxon>
        <taxon>Laurasiatheria</taxon>
        <taxon>Artiodactyla</taxon>
        <taxon>Ruminantia</taxon>
        <taxon>Pecora</taxon>
        <taxon>Cervidae</taxon>
        <taxon>Cervinae</taxon>
        <taxon>Dama</taxon>
    </lineage>
</organism>
<proteinExistence type="evidence at protein level"/>
<comment type="subcellular location">
    <subcellularLocation>
        <location evidence="1">Secreted</location>
        <location evidence="1">Extracellular space</location>
    </subcellularLocation>
</comment>
<comment type="tissue specificity">
    <text evidence="3">Expressed in placenta, specifically the fetal cotyledonary tissue (FCT) (at protein level).</text>
</comment>
<comment type="similarity">
    <text evidence="2">Belongs to the peptidase A1 family.</text>
</comment>
<protein>
    <recommendedName>
        <fullName evidence="4">Pregnancy-associated glycoprotein 39C</fullName>
        <shortName evidence="4">FdPAG39C</shortName>
    </recommendedName>
</protein>
<name>PA39C_DAMDA</name>
<sequence length="10" mass="987">DVGPSTLANN</sequence>
<evidence type="ECO:0000250" key="1">
    <source>
        <dbReference type="UniProtKB" id="Q29432"/>
    </source>
</evidence>
<evidence type="ECO:0000255" key="2"/>
<evidence type="ECO:0000269" key="3">
    <source>
    </source>
</evidence>
<evidence type="ECO:0000303" key="4">
    <source>
    </source>
</evidence>
<evidence type="ECO:0000305" key="5"/>
<keyword id="KW-0064">Aspartyl protease</keyword>
<keyword id="KW-0903">Direct protein sequencing</keyword>
<keyword id="KW-0378">Hydrolase</keyword>
<keyword id="KW-0645">Protease</keyword>
<keyword id="KW-0964">Secreted</keyword>